<proteinExistence type="inferred from homology"/>
<accession>B3PIK9</accession>
<keyword id="KW-0963">Cytoplasm</keyword>
<keyword id="KW-0251">Elongation factor</keyword>
<keyword id="KW-0648">Protein biosynthesis</keyword>
<keyword id="KW-1185">Reference proteome</keyword>
<dbReference type="EMBL" id="CP000934">
    <property type="protein sequence ID" value="ACE84270.1"/>
    <property type="molecule type" value="Genomic_DNA"/>
</dbReference>
<dbReference type="RefSeq" id="WP_012487751.1">
    <property type="nucleotide sequence ID" value="NC_010995.1"/>
</dbReference>
<dbReference type="SMR" id="B3PIK9"/>
<dbReference type="STRING" id="498211.CJA_2149"/>
<dbReference type="KEGG" id="cja:CJA_2149"/>
<dbReference type="eggNOG" id="COG0231">
    <property type="taxonomic scope" value="Bacteria"/>
</dbReference>
<dbReference type="HOGENOM" id="CLU_074944_2_1_6"/>
<dbReference type="OrthoDB" id="9801844at2"/>
<dbReference type="UniPathway" id="UPA00345"/>
<dbReference type="Proteomes" id="UP000001036">
    <property type="component" value="Chromosome"/>
</dbReference>
<dbReference type="GO" id="GO:0005737">
    <property type="term" value="C:cytoplasm"/>
    <property type="evidence" value="ECO:0007669"/>
    <property type="project" value="UniProtKB-SubCell"/>
</dbReference>
<dbReference type="GO" id="GO:0003746">
    <property type="term" value="F:translation elongation factor activity"/>
    <property type="evidence" value="ECO:0007669"/>
    <property type="project" value="UniProtKB-UniRule"/>
</dbReference>
<dbReference type="GO" id="GO:0043043">
    <property type="term" value="P:peptide biosynthetic process"/>
    <property type="evidence" value="ECO:0007669"/>
    <property type="project" value="InterPro"/>
</dbReference>
<dbReference type="CDD" id="cd04470">
    <property type="entry name" value="S1_EF-P_repeat_1"/>
    <property type="match status" value="1"/>
</dbReference>
<dbReference type="CDD" id="cd05794">
    <property type="entry name" value="S1_EF-P_repeat_2"/>
    <property type="match status" value="1"/>
</dbReference>
<dbReference type="FunFam" id="2.30.30.30:FF:000003">
    <property type="entry name" value="Elongation factor P"/>
    <property type="match status" value="1"/>
</dbReference>
<dbReference type="FunFam" id="2.40.50.140:FF:000004">
    <property type="entry name" value="Elongation factor P"/>
    <property type="match status" value="1"/>
</dbReference>
<dbReference type="FunFam" id="2.40.50.140:FF:000009">
    <property type="entry name" value="Elongation factor P"/>
    <property type="match status" value="1"/>
</dbReference>
<dbReference type="Gene3D" id="2.30.30.30">
    <property type="match status" value="1"/>
</dbReference>
<dbReference type="Gene3D" id="2.40.50.140">
    <property type="entry name" value="Nucleic acid-binding proteins"/>
    <property type="match status" value="2"/>
</dbReference>
<dbReference type="HAMAP" id="MF_00141">
    <property type="entry name" value="EF_P"/>
    <property type="match status" value="1"/>
</dbReference>
<dbReference type="InterPro" id="IPR015365">
    <property type="entry name" value="Elong-fact-P_C"/>
</dbReference>
<dbReference type="InterPro" id="IPR012340">
    <property type="entry name" value="NA-bd_OB-fold"/>
</dbReference>
<dbReference type="InterPro" id="IPR014722">
    <property type="entry name" value="Rib_uL2_dom2"/>
</dbReference>
<dbReference type="InterPro" id="IPR020599">
    <property type="entry name" value="Transl_elong_fac_P/YeiP"/>
</dbReference>
<dbReference type="InterPro" id="IPR013185">
    <property type="entry name" value="Transl_elong_KOW-like"/>
</dbReference>
<dbReference type="InterPro" id="IPR001059">
    <property type="entry name" value="Transl_elong_P/YeiP_cen"/>
</dbReference>
<dbReference type="InterPro" id="IPR011768">
    <property type="entry name" value="Transl_elongation_fac_P"/>
</dbReference>
<dbReference type="InterPro" id="IPR008991">
    <property type="entry name" value="Translation_prot_SH3-like_sf"/>
</dbReference>
<dbReference type="NCBIfam" id="TIGR00038">
    <property type="entry name" value="efp"/>
    <property type="match status" value="1"/>
</dbReference>
<dbReference type="NCBIfam" id="NF001810">
    <property type="entry name" value="PRK00529.1"/>
    <property type="match status" value="1"/>
</dbReference>
<dbReference type="PANTHER" id="PTHR30053">
    <property type="entry name" value="ELONGATION FACTOR P"/>
    <property type="match status" value="1"/>
</dbReference>
<dbReference type="PANTHER" id="PTHR30053:SF12">
    <property type="entry name" value="ELONGATION FACTOR P (EF-P) FAMILY PROTEIN"/>
    <property type="match status" value="1"/>
</dbReference>
<dbReference type="Pfam" id="PF01132">
    <property type="entry name" value="EFP"/>
    <property type="match status" value="1"/>
</dbReference>
<dbReference type="Pfam" id="PF08207">
    <property type="entry name" value="EFP_N"/>
    <property type="match status" value="1"/>
</dbReference>
<dbReference type="Pfam" id="PF09285">
    <property type="entry name" value="Elong-fact-P_C"/>
    <property type="match status" value="1"/>
</dbReference>
<dbReference type="PIRSF" id="PIRSF005901">
    <property type="entry name" value="EF-P"/>
    <property type="match status" value="1"/>
</dbReference>
<dbReference type="SMART" id="SM01185">
    <property type="entry name" value="EFP"/>
    <property type="match status" value="1"/>
</dbReference>
<dbReference type="SMART" id="SM00841">
    <property type="entry name" value="Elong-fact-P_C"/>
    <property type="match status" value="1"/>
</dbReference>
<dbReference type="SUPFAM" id="SSF50249">
    <property type="entry name" value="Nucleic acid-binding proteins"/>
    <property type="match status" value="2"/>
</dbReference>
<dbReference type="SUPFAM" id="SSF50104">
    <property type="entry name" value="Translation proteins SH3-like domain"/>
    <property type="match status" value="1"/>
</dbReference>
<sequence>MKIAQECRAGNVVMIDGSPWVVQKAEYNKSGRNAAVVKMKLKNLLSGINTETVYKADDKFEDILLDRKEVTYSYYADPMYVFMDGEYNQYEVTKEDLGDLLPWIEDGMEDVCDAVFYEGKVISVTAPTSIVREIAYTEPAVRGDTSGKVMKVAKLKNGTELSVAAFVEIGEKIIIDTRTGEYKSRAKD</sequence>
<gene>
    <name evidence="1" type="primary">efp</name>
    <name type="ordered locus">CJA_2149</name>
</gene>
<name>EFP_CELJU</name>
<protein>
    <recommendedName>
        <fullName evidence="1">Elongation factor P</fullName>
        <shortName evidence="1">EF-P</shortName>
    </recommendedName>
</protein>
<feature type="chain" id="PRO_1000096133" description="Elongation factor P">
    <location>
        <begin position="1"/>
        <end position="188"/>
    </location>
</feature>
<organism>
    <name type="scientific">Cellvibrio japonicus (strain Ueda107)</name>
    <name type="common">Pseudomonas fluorescens subsp. cellulosa</name>
    <dbReference type="NCBI Taxonomy" id="498211"/>
    <lineage>
        <taxon>Bacteria</taxon>
        <taxon>Pseudomonadati</taxon>
        <taxon>Pseudomonadota</taxon>
        <taxon>Gammaproteobacteria</taxon>
        <taxon>Cellvibrionales</taxon>
        <taxon>Cellvibrionaceae</taxon>
        <taxon>Cellvibrio</taxon>
    </lineage>
</organism>
<comment type="function">
    <text evidence="1">Involved in peptide bond synthesis. Stimulates efficient translation and peptide-bond synthesis on native or reconstituted 70S ribosomes in vitro. Probably functions indirectly by altering the affinity of the ribosome for aminoacyl-tRNA, thus increasing their reactivity as acceptors for peptidyl transferase.</text>
</comment>
<comment type="pathway">
    <text evidence="1">Protein biosynthesis; polypeptide chain elongation.</text>
</comment>
<comment type="subcellular location">
    <subcellularLocation>
        <location evidence="1">Cytoplasm</location>
    </subcellularLocation>
</comment>
<comment type="similarity">
    <text evidence="1">Belongs to the elongation factor P family.</text>
</comment>
<evidence type="ECO:0000255" key="1">
    <source>
        <dbReference type="HAMAP-Rule" id="MF_00141"/>
    </source>
</evidence>
<reference key="1">
    <citation type="journal article" date="2008" name="J. Bacteriol.">
        <title>Insights into plant cell wall degradation from the genome sequence of the soil bacterium Cellvibrio japonicus.</title>
        <authorList>
            <person name="DeBoy R.T."/>
            <person name="Mongodin E.F."/>
            <person name="Fouts D.E."/>
            <person name="Tailford L.E."/>
            <person name="Khouri H."/>
            <person name="Emerson J.B."/>
            <person name="Mohamoud Y."/>
            <person name="Watkins K."/>
            <person name="Henrissat B."/>
            <person name="Gilbert H.J."/>
            <person name="Nelson K.E."/>
        </authorList>
    </citation>
    <scope>NUCLEOTIDE SEQUENCE [LARGE SCALE GENOMIC DNA]</scope>
    <source>
        <strain>Ueda107</strain>
    </source>
</reference>